<keyword id="KW-0997">Cell inner membrane</keyword>
<keyword id="KW-1003">Cell membrane</keyword>
<keyword id="KW-0472">Membrane</keyword>
<keyword id="KW-0812">Transmembrane</keyword>
<keyword id="KW-1133">Transmembrane helix</keyword>
<gene>
    <name evidence="1" type="primary">yciC</name>
    <name type="ordered locus">ECED1_1409</name>
</gene>
<sequence>MSITAQSVYRDTGNFFRNQFMTILLVSLLCAFITVVLGHVFSPSDAQLAQLNDGVPVSGSSGLFDLVQNMSPEQQQILLQASAASTFSGLIGNAILAGGVILIIQLVSAGQRVSALRAIGASAPILPKLFILIFLTTLLVQIGIMLVVVPGIIMAILLALAPVMLVQDKMGVFASMRSSMRLTWANMRLVAPAVLSWLLAKTLLLLFASSFAALTPEIGAVLANTLSNLISAVLLIYLFRLYMLIRQ</sequence>
<reference key="1">
    <citation type="journal article" date="2009" name="PLoS Genet.">
        <title>Organised genome dynamics in the Escherichia coli species results in highly diverse adaptive paths.</title>
        <authorList>
            <person name="Touchon M."/>
            <person name="Hoede C."/>
            <person name="Tenaillon O."/>
            <person name="Barbe V."/>
            <person name="Baeriswyl S."/>
            <person name="Bidet P."/>
            <person name="Bingen E."/>
            <person name="Bonacorsi S."/>
            <person name="Bouchier C."/>
            <person name="Bouvet O."/>
            <person name="Calteau A."/>
            <person name="Chiapello H."/>
            <person name="Clermont O."/>
            <person name="Cruveiller S."/>
            <person name="Danchin A."/>
            <person name="Diard M."/>
            <person name="Dossat C."/>
            <person name="Karoui M.E."/>
            <person name="Frapy E."/>
            <person name="Garry L."/>
            <person name="Ghigo J.M."/>
            <person name="Gilles A.M."/>
            <person name="Johnson J."/>
            <person name="Le Bouguenec C."/>
            <person name="Lescat M."/>
            <person name="Mangenot S."/>
            <person name="Martinez-Jehanne V."/>
            <person name="Matic I."/>
            <person name="Nassif X."/>
            <person name="Oztas S."/>
            <person name="Petit M.A."/>
            <person name="Pichon C."/>
            <person name="Rouy Z."/>
            <person name="Ruf C.S."/>
            <person name="Schneider D."/>
            <person name="Tourret J."/>
            <person name="Vacherie B."/>
            <person name="Vallenet D."/>
            <person name="Medigue C."/>
            <person name="Rocha E.P.C."/>
            <person name="Denamur E."/>
        </authorList>
    </citation>
    <scope>NUCLEOTIDE SEQUENCE [LARGE SCALE GENOMIC DNA]</scope>
    <source>
        <strain>ED1a</strain>
    </source>
</reference>
<dbReference type="EMBL" id="CU928162">
    <property type="protein sequence ID" value="CAR07608.1"/>
    <property type="molecule type" value="Genomic_DNA"/>
</dbReference>
<dbReference type="RefSeq" id="WP_000028546.1">
    <property type="nucleotide sequence ID" value="NC_011745.1"/>
</dbReference>
<dbReference type="KEGG" id="ecq:ECED1_1409"/>
<dbReference type="HOGENOM" id="CLU_073287_0_0_6"/>
<dbReference type="Proteomes" id="UP000000748">
    <property type="component" value="Chromosome"/>
</dbReference>
<dbReference type="GO" id="GO:0005886">
    <property type="term" value="C:plasma membrane"/>
    <property type="evidence" value="ECO:0007669"/>
    <property type="project" value="UniProtKB-SubCell"/>
</dbReference>
<dbReference type="HAMAP" id="MF_01067">
    <property type="entry name" value="UPF0259"/>
    <property type="match status" value="1"/>
</dbReference>
<dbReference type="InterPro" id="IPR009627">
    <property type="entry name" value="UPF0259"/>
</dbReference>
<dbReference type="NCBIfam" id="NF002774">
    <property type="entry name" value="PRK02868.1"/>
    <property type="match status" value="1"/>
</dbReference>
<dbReference type="Pfam" id="PF06790">
    <property type="entry name" value="UPF0259"/>
    <property type="match status" value="1"/>
</dbReference>
<proteinExistence type="inferred from homology"/>
<organism>
    <name type="scientific">Escherichia coli O81 (strain ED1a)</name>
    <dbReference type="NCBI Taxonomy" id="585397"/>
    <lineage>
        <taxon>Bacteria</taxon>
        <taxon>Pseudomonadati</taxon>
        <taxon>Pseudomonadota</taxon>
        <taxon>Gammaproteobacteria</taxon>
        <taxon>Enterobacterales</taxon>
        <taxon>Enterobacteriaceae</taxon>
        <taxon>Escherichia</taxon>
    </lineage>
</organism>
<evidence type="ECO:0000255" key="1">
    <source>
        <dbReference type="HAMAP-Rule" id="MF_01067"/>
    </source>
</evidence>
<protein>
    <recommendedName>
        <fullName evidence="1">UPF0259 membrane protein YciC</fullName>
    </recommendedName>
</protein>
<name>YCIC_ECO81</name>
<feature type="chain" id="PRO_1000149743" description="UPF0259 membrane protein YciC">
    <location>
        <begin position="1"/>
        <end position="247"/>
    </location>
</feature>
<feature type="transmembrane region" description="Helical" evidence="1">
    <location>
        <begin position="20"/>
        <end position="40"/>
    </location>
</feature>
<feature type="transmembrane region" description="Helical" evidence="1">
    <location>
        <begin position="87"/>
        <end position="107"/>
    </location>
</feature>
<feature type="transmembrane region" description="Helical" evidence="1">
    <location>
        <begin position="118"/>
        <end position="140"/>
    </location>
</feature>
<feature type="transmembrane region" description="Helical" evidence="1">
    <location>
        <begin position="152"/>
        <end position="172"/>
    </location>
</feature>
<feature type="transmembrane region" description="Helical" evidence="1">
    <location>
        <begin position="187"/>
        <end position="209"/>
    </location>
</feature>
<feature type="transmembrane region" description="Helical" evidence="1">
    <location>
        <begin position="225"/>
        <end position="245"/>
    </location>
</feature>
<comment type="subcellular location">
    <subcellularLocation>
        <location evidence="1">Cell inner membrane</location>
        <topology evidence="1">Multi-pass membrane protein</topology>
    </subcellularLocation>
</comment>
<comment type="similarity">
    <text evidence="1">Belongs to the UPF0259 family.</text>
</comment>
<accession>B7MU43</accession>